<gene>
    <name evidence="1" type="primary">purL</name>
    <name type="ordered locus">Syncc9902_0003</name>
</gene>
<comment type="function">
    <text evidence="1">Part of the phosphoribosylformylglycinamidine synthase complex involved in the purines biosynthetic pathway. Catalyzes the ATP-dependent conversion of formylglycinamide ribonucleotide (FGAR) and glutamine to yield formylglycinamidine ribonucleotide (FGAM) and glutamate. The FGAM synthase complex is composed of three subunits. PurQ produces an ammonia molecule by converting glutamine to glutamate. PurL transfers the ammonia molecule to FGAR to form FGAM in an ATP-dependent manner. PurS interacts with PurQ and PurL and is thought to assist in the transfer of the ammonia molecule from PurQ to PurL.</text>
</comment>
<comment type="catalytic activity">
    <reaction evidence="1">
        <text>N(2)-formyl-N(1)-(5-phospho-beta-D-ribosyl)glycinamide + L-glutamine + ATP + H2O = 2-formamido-N(1)-(5-O-phospho-beta-D-ribosyl)acetamidine + L-glutamate + ADP + phosphate + H(+)</text>
        <dbReference type="Rhea" id="RHEA:17129"/>
        <dbReference type="ChEBI" id="CHEBI:15377"/>
        <dbReference type="ChEBI" id="CHEBI:15378"/>
        <dbReference type="ChEBI" id="CHEBI:29985"/>
        <dbReference type="ChEBI" id="CHEBI:30616"/>
        <dbReference type="ChEBI" id="CHEBI:43474"/>
        <dbReference type="ChEBI" id="CHEBI:58359"/>
        <dbReference type="ChEBI" id="CHEBI:147286"/>
        <dbReference type="ChEBI" id="CHEBI:147287"/>
        <dbReference type="ChEBI" id="CHEBI:456216"/>
        <dbReference type="EC" id="6.3.5.3"/>
    </reaction>
</comment>
<comment type="pathway">
    <text evidence="1">Purine metabolism; IMP biosynthesis via de novo pathway; 5-amino-1-(5-phospho-D-ribosyl)imidazole from N(2)-formyl-N(1)-(5-phospho-D-ribosyl)glycinamide: step 1/2.</text>
</comment>
<comment type="subunit">
    <text evidence="1">Monomer. Part of the FGAM synthase complex composed of 1 PurL, 1 PurQ and 2 PurS subunits.</text>
</comment>
<comment type="subcellular location">
    <subcellularLocation>
        <location evidence="1">Cytoplasm</location>
    </subcellularLocation>
</comment>
<comment type="similarity">
    <text evidence="1">Belongs to the FGAMS family.</text>
</comment>
<proteinExistence type="inferred from homology"/>
<keyword id="KW-0067">ATP-binding</keyword>
<keyword id="KW-0963">Cytoplasm</keyword>
<keyword id="KW-0436">Ligase</keyword>
<keyword id="KW-0460">Magnesium</keyword>
<keyword id="KW-0479">Metal-binding</keyword>
<keyword id="KW-0547">Nucleotide-binding</keyword>
<keyword id="KW-0658">Purine biosynthesis</keyword>
<keyword id="KW-1185">Reference proteome</keyword>
<sequence length="766" mass="80768">MVSSSSYDVSAALKQEGLKSSDWDEICRRLGREPNRAELGMFGVMWSEHCCYRNSRPLLSGFPTEGPRILVGPGENAGVVDLGDGHRLAFKIESHNHPSAVEPFQGAATGVGGILRDIFTMGARPIALLNALRFGPLDDSANVGLMEGVVAGIAHYGNCVGVPTVGGEVAFDPSYSGNPLVNAMALGLMETKDIVKSGAIGVGNPVVYVGSTTGRDGMGGASFASAELSADSLDDRPAVQVGDPFLEKGLIEACLEAFDSGDVVAAQDMGAAGLTCSCSEMAAKGGLGVELDLDRVPARESGMTAYEFLLSESQERMLFVVKAGREEPLMKRFRRWGLQAAVVGQVLEEPIVRVLHHGEVAAEVPATALADDTPIEKHALLSEPPVDLQEHWQWTEAQLPDLADPAAALLGLLDDPTIASKRWVHRQYDQQVLANTVVSSGAADAAVIRLRPQQGDGSLKTTTRGVAATVDCPNRWVALDPERGAMAAVAEAARNLSCVGSEPLAITDNLNFPSPETPKGFWQLAMACRGISEACKAFQTPVTGGNVSLYNETRRDDGSLQPIHPTPVIGMVGVVDDITKVTGLGWCQPGDVVVLLGVKPDADQDDRVGLAGSSYQQFTLGTITGRPPRIDFDLEKRVQGLVRQAIADGLIASAHDSSDGGLAVALAECSIASGFGVELTLSVGTMSPARLLFAEGGARVVVSVKADQLTRWQTMLTSNPDVSTTVLGTVASHGRFQLSFGVGSTIDLSVDQLQQVYADALPRRLA</sequence>
<reference key="1">
    <citation type="submission" date="2005-08" db="EMBL/GenBank/DDBJ databases">
        <title>Complete sequence of Synechococcus sp. CC9902.</title>
        <authorList>
            <person name="Copeland A."/>
            <person name="Lucas S."/>
            <person name="Lapidus A."/>
            <person name="Barry K."/>
            <person name="Detter J.C."/>
            <person name="Glavina T."/>
            <person name="Hammon N."/>
            <person name="Israni S."/>
            <person name="Pitluck S."/>
            <person name="Martinez M."/>
            <person name="Schmutz J."/>
            <person name="Larimer F."/>
            <person name="Land M."/>
            <person name="Kyrpides N."/>
            <person name="Ivanova N."/>
            <person name="Richardson P."/>
        </authorList>
    </citation>
    <scope>NUCLEOTIDE SEQUENCE [LARGE SCALE GENOMIC DNA]</scope>
    <source>
        <strain>CC9902</strain>
    </source>
</reference>
<evidence type="ECO:0000255" key="1">
    <source>
        <dbReference type="HAMAP-Rule" id="MF_00420"/>
    </source>
</evidence>
<organism>
    <name type="scientific">Synechococcus sp. (strain CC9902)</name>
    <dbReference type="NCBI Taxonomy" id="316279"/>
    <lineage>
        <taxon>Bacteria</taxon>
        <taxon>Bacillati</taxon>
        <taxon>Cyanobacteriota</taxon>
        <taxon>Cyanophyceae</taxon>
        <taxon>Synechococcales</taxon>
        <taxon>Synechococcaceae</taxon>
        <taxon>Synechococcus</taxon>
    </lineage>
</organism>
<protein>
    <recommendedName>
        <fullName evidence="1">Phosphoribosylformylglycinamidine synthase subunit PurL</fullName>
        <shortName evidence="1">FGAM synthase</shortName>
        <ecNumber evidence="1">6.3.5.3</ecNumber>
    </recommendedName>
    <alternativeName>
        <fullName evidence="1">Formylglycinamide ribonucleotide amidotransferase subunit II</fullName>
        <shortName evidence="1">FGAR amidotransferase II</shortName>
        <shortName evidence="1">FGAR-AT II</shortName>
    </alternativeName>
    <alternativeName>
        <fullName evidence="1">Glutamine amidotransferase PurL</fullName>
    </alternativeName>
    <alternativeName>
        <fullName evidence="1">Phosphoribosylformylglycinamidine synthase subunit II</fullName>
    </alternativeName>
</protein>
<accession>Q3B100</accession>
<name>PURL_SYNS9</name>
<dbReference type="EC" id="6.3.5.3" evidence="1"/>
<dbReference type="EMBL" id="CP000097">
    <property type="protein sequence ID" value="ABB24978.1"/>
    <property type="molecule type" value="Genomic_DNA"/>
</dbReference>
<dbReference type="RefSeq" id="WP_011358848.1">
    <property type="nucleotide sequence ID" value="NC_007513.1"/>
</dbReference>
<dbReference type="SMR" id="Q3B100"/>
<dbReference type="STRING" id="316279.Syncc9902_0003"/>
<dbReference type="KEGG" id="sye:Syncc9902_0003"/>
<dbReference type="eggNOG" id="COG0046">
    <property type="taxonomic scope" value="Bacteria"/>
</dbReference>
<dbReference type="HOGENOM" id="CLU_003100_0_1_3"/>
<dbReference type="OrthoDB" id="9804441at2"/>
<dbReference type="UniPathway" id="UPA00074">
    <property type="reaction ID" value="UER00128"/>
</dbReference>
<dbReference type="Proteomes" id="UP000002712">
    <property type="component" value="Chromosome"/>
</dbReference>
<dbReference type="GO" id="GO:0005737">
    <property type="term" value="C:cytoplasm"/>
    <property type="evidence" value="ECO:0007669"/>
    <property type="project" value="UniProtKB-SubCell"/>
</dbReference>
<dbReference type="GO" id="GO:0005524">
    <property type="term" value="F:ATP binding"/>
    <property type="evidence" value="ECO:0007669"/>
    <property type="project" value="UniProtKB-UniRule"/>
</dbReference>
<dbReference type="GO" id="GO:0000287">
    <property type="term" value="F:magnesium ion binding"/>
    <property type="evidence" value="ECO:0007669"/>
    <property type="project" value="UniProtKB-UniRule"/>
</dbReference>
<dbReference type="GO" id="GO:0004642">
    <property type="term" value="F:phosphoribosylformylglycinamidine synthase activity"/>
    <property type="evidence" value="ECO:0007669"/>
    <property type="project" value="UniProtKB-UniRule"/>
</dbReference>
<dbReference type="GO" id="GO:0006189">
    <property type="term" value="P:'de novo' IMP biosynthetic process"/>
    <property type="evidence" value="ECO:0007669"/>
    <property type="project" value="UniProtKB-UniRule"/>
</dbReference>
<dbReference type="CDD" id="cd02203">
    <property type="entry name" value="PurL_repeat1"/>
    <property type="match status" value="1"/>
</dbReference>
<dbReference type="CDD" id="cd02204">
    <property type="entry name" value="PurL_repeat2"/>
    <property type="match status" value="1"/>
</dbReference>
<dbReference type="FunFam" id="3.30.1330.10:FF:000004">
    <property type="entry name" value="Phosphoribosylformylglycinamidine synthase subunit PurL"/>
    <property type="match status" value="1"/>
</dbReference>
<dbReference type="Gene3D" id="3.90.650.10">
    <property type="entry name" value="PurM-like C-terminal domain"/>
    <property type="match status" value="2"/>
</dbReference>
<dbReference type="Gene3D" id="3.30.1330.10">
    <property type="entry name" value="PurM-like, N-terminal domain"/>
    <property type="match status" value="2"/>
</dbReference>
<dbReference type="HAMAP" id="MF_00420">
    <property type="entry name" value="PurL_2"/>
    <property type="match status" value="1"/>
</dbReference>
<dbReference type="InterPro" id="IPR010074">
    <property type="entry name" value="PRibForGlyAmidine_synth_PurL"/>
</dbReference>
<dbReference type="InterPro" id="IPR041609">
    <property type="entry name" value="PurL_linker"/>
</dbReference>
<dbReference type="InterPro" id="IPR010918">
    <property type="entry name" value="PurM-like_C_dom"/>
</dbReference>
<dbReference type="InterPro" id="IPR036676">
    <property type="entry name" value="PurM-like_C_sf"/>
</dbReference>
<dbReference type="InterPro" id="IPR016188">
    <property type="entry name" value="PurM-like_N"/>
</dbReference>
<dbReference type="InterPro" id="IPR036921">
    <property type="entry name" value="PurM-like_N_sf"/>
</dbReference>
<dbReference type="NCBIfam" id="TIGR01736">
    <property type="entry name" value="FGAM_synth_II"/>
    <property type="match status" value="1"/>
</dbReference>
<dbReference type="NCBIfam" id="NF002290">
    <property type="entry name" value="PRK01213.1"/>
    <property type="match status" value="1"/>
</dbReference>
<dbReference type="PANTHER" id="PTHR43555">
    <property type="entry name" value="PHOSPHORIBOSYLFORMYLGLYCINAMIDINE SYNTHASE SUBUNIT PURL"/>
    <property type="match status" value="1"/>
</dbReference>
<dbReference type="PANTHER" id="PTHR43555:SF1">
    <property type="entry name" value="PHOSPHORIBOSYLFORMYLGLYCINAMIDINE SYNTHASE SUBUNIT PURL"/>
    <property type="match status" value="1"/>
</dbReference>
<dbReference type="Pfam" id="PF00586">
    <property type="entry name" value="AIRS"/>
    <property type="match status" value="2"/>
</dbReference>
<dbReference type="Pfam" id="PF02769">
    <property type="entry name" value="AIRS_C"/>
    <property type="match status" value="2"/>
</dbReference>
<dbReference type="Pfam" id="PF18072">
    <property type="entry name" value="FGAR-AT_linker"/>
    <property type="match status" value="1"/>
</dbReference>
<dbReference type="PIRSF" id="PIRSF001587">
    <property type="entry name" value="FGAM_synthase_II"/>
    <property type="match status" value="1"/>
</dbReference>
<dbReference type="SUPFAM" id="SSF56042">
    <property type="entry name" value="PurM C-terminal domain-like"/>
    <property type="match status" value="2"/>
</dbReference>
<dbReference type="SUPFAM" id="SSF55326">
    <property type="entry name" value="PurM N-terminal domain-like"/>
    <property type="match status" value="2"/>
</dbReference>
<feature type="chain" id="PRO_0000236670" description="Phosphoribosylformylglycinamidine synthase subunit PurL">
    <location>
        <begin position="1"/>
        <end position="766"/>
    </location>
</feature>
<feature type="active site" evidence="1">
    <location>
        <position position="49"/>
    </location>
</feature>
<feature type="active site" description="Proton acceptor" evidence="1">
    <location>
        <position position="95"/>
    </location>
</feature>
<feature type="binding site" evidence="1">
    <location>
        <position position="52"/>
    </location>
    <ligand>
        <name>ATP</name>
        <dbReference type="ChEBI" id="CHEBI:30616"/>
    </ligand>
</feature>
<feature type="binding site" evidence="1">
    <location>
        <position position="91"/>
    </location>
    <ligand>
        <name>ATP</name>
        <dbReference type="ChEBI" id="CHEBI:30616"/>
    </ligand>
</feature>
<feature type="binding site" evidence="1">
    <location>
        <position position="93"/>
    </location>
    <ligand>
        <name>Mg(2+)</name>
        <dbReference type="ChEBI" id="CHEBI:18420"/>
        <label>1</label>
    </ligand>
</feature>
<feature type="binding site" evidence="1">
    <location>
        <begin position="94"/>
        <end position="97"/>
    </location>
    <ligand>
        <name>substrate</name>
    </ligand>
</feature>
<feature type="binding site" evidence="1">
    <location>
        <position position="116"/>
    </location>
    <ligand>
        <name>substrate</name>
    </ligand>
</feature>
<feature type="binding site" evidence="1">
    <location>
        <position position="117"/>
    </location>
    <ligand>
        <name>Mg(2+)</name>
        <dbReference type="ChEBI" id="CHEBI:18420"/>
        <label>2</label>
    </ligand>
</feature>
<feature type="binding site" evidence="1">
    <location>
        <position position="240"/>
    </location>
    <ligand>
        <name>substrate</name>
    </ligand>
</feature>
<feature type="binding site" evidence="1">
    <location>
        <position position="268"/>
    </location>
    <ligand>
        <name>Mg(2+)</name>
        <dbReference type="ChEBI" id="CHEBI:18420"/>
        <label>2</label>
    </ligand>
</feature>
<feature type="binding site" evidence="1">
    <location>
        <begin position="312"/>
        <end position="314"/>
    </location>
    <ligand>
        <name>substrate</name>
    </ligand>
</feature>
<feature type="binding site" evidence="1">
    <location>
        <position position="508"/>
    </location>
    <ligand>
        <name>ATP</name>
        <dbReference type="ChEBI" id="CHEBI:30616"/>
    </ligand>
</feature>
<feature type="binding site" evidence="1">
    <location>
        <position position="545"/>
    </location>
    <ligand>
        <name>ATP</name>
        <dbReference type="ChEBI" id="CHEBI:30616"/>
    </ligand>
</feature>
<feature type="binding site" evidence="1">
    <location>
        <position position="546"/>
    </location>
    <ligand>
        <name>Mg(2+)</name>
        <dbReference type="ChEBI" id="CHEBI:18420"/>
        <label>1</label>
    </ligand>
</feature>
<feature type="binding site" evidence="1">
    <location>
        <position position="548"/>
    </location>
    <ligand>
        <name>substrate</name>
    </ligand>
</feature>